<accession>Q8GUN6</accession>
<accession>Q8RXY7</accession>
<accession>Q9SYB3</accession>
<protein>
    <recommendedName>
        <fullName>Chaperone protein dnaJ 50</fullName>
        <shortName>AtDjC50</shortName>
        <shortName>AtJ50</shortName>
    </recommendedName>
</protein>
<proteinExistence type="evidence at transcript level"/>
<evidence type="ECO:0000255" key="1"/>
<evidence type="ECO:0000255" key="2">
    <source>
        <dbReference type="PROSITE-ProRule" id="PRU00286"/>
    </source>
</evidence>
<evidence type="ECO:0000255" key="3">
    <source>
        <dbReference type="PROSITE-ProRule" id="PRU00498"/>
    </source>
</evidence>
<evidence type="ECO:0000269" key="4">
    <source>
    </source>
</evidence>
<evidence type="ECO:0000305" key="5"/>
<evidence type="ECO:0000305" key="6">
    <source>
    </source>
</evidence>
<keyword id="KW-0143">Chaperone</keyword>
<keyword id="KW-0256">Endoplasmic reticulum</keyword>
<keyword id="KW-0325">Glycoprotein</keyword>
<keyword id="KW-0472">Membrane</keyword>
<keyword id="KW-1185">Reference proteome</keyword>
<keyword id="KW-0732">Signal</keyword>
<keyword id="KW-0812">Transmembrane</keyword>
<keyword id="KW-1133">Transmembrane helix</keyword>
<organism>
    <name type="scientific">Arabidopsis thaliana</name>
    <name type="common">Mouse-ear cress</name>
    <dbReference type="NCBI Taxonomy" id="3702"/>
    <lineage>
        <taxon>Eukaryota</taxon>
        <taxon>Viridiplantae</taxon>
        <taxon>Streptophyta</taxon>
        <taxon>Embryophyta</taxon>
        <taxon>Tracheophyta</taxon>
        <taxon>Spermatophyta</taxon>
        <taxon>Magnoliopsida</taxon>
        <taxon>eudicotyledons</taxon>
        <taxon>Gunneridae</taxon>
        <taxon>Pentapetalae</taxon>
        <taxon>rosids</taxon>
        <taxon>malvids</taxon>
        <taxon>Brassicales</taxon>
        <taxon>Brassicaceae</taxon>
        <taxon>Camelineae</taxon>
        <taxon>Arabidopsis</taxon>
    </lineage>
</organism>
<gene>
    <name type="primary">C50</name>
    <name type="ordered locus">At1g61770</name>
    <name type="ORF">T13M11.13</name>
</gene>
<name>DNJ50_ARATH</name>
<sequence length="300" mass="34952">MAPPVTERWCLALILLFLSLFVQSSTAIYCGAEDCYALLGVAQDANASDIKRSYYKLSLQHHPDKNPDPESRKLFVKIATAYEILKDNTTRAQYDYAIEHPEEVFYNTAQYYRAKYGHKSDPRAVLVGLLVVLSAFQYLNNVARYNEAIATVKRTPAYKNKLKALELERTGGVSNKKKGSKQIDQKLQEELSNELDLQIKGAEKPSVWELLGVRFILLPYTIIKLLVWYSSWVWRYKVKKAPYSWEDASYLTRRSLSVPADAWANLDEYRKEDLVQKRLWEKQNLENYFAEMRKESKRRR</sequence>
<feature type="signal peptide" evidence="1">
    <location>
        <begin position="1"/>
        <end position="27"/>
    </location>
</feature>
<feature type="chain" id="PRO_0000430367" description="Chaperone protein dnaJ 50" evidence="1">
    <location>
        <begin position="28"/>
        <end position="300"/>
    </location>
</feature>
<feature type="topological domain" description="Lumenal" evidence="5">
    <location>
        <begin position="28"/>
        <end position="122"/>
    </location>
</feature>
<feature type="transmembrane region" description="Helical; Name=2" evidence="1">
    <location>
        <begin position="123"/>
        <end position="143"/>
    </location>
</feature>
<feature type="topological domain" description="Cytoplasmic" evidence="5">
    <location>
        <begin position="144"/>
        <end position="206"/>
    </location>
</feature>
<feature type="transmembrane region" description="Helical; Name=3" evidence="1">
    <location>
        <begin position="207"/>
        <end position="227"/>
    </location>
</feature>
<feature type="topological domain" description="Lumenal" evidence="5">
    <location>
        <begin position="228"/>
        <end position="300"/>
    </location>
</feature>
<feature type="domain" description="J" evidence="2">
    <location>
        <begin position="34"/>
        <end position="98"/>
    </location>
</feature>
<feature type="glycosylation site" description="N-linked (GlcNAc...) asparagine" evidence="3">
    <location>
        <position position="46"/>
    </location>
</feature>
<feature type="glycosylation site" description="N-linked (GlcNAc...) asparagine" evidence="3">
    <location>
        <position position="88"/>
    </location>
</feature>
<comment type="function">
    <text evidence="6">May play a role in protein folding in the endoplasmic reticulum.</text>
</comment>
<comment type="subcellular location">
    <subcellularLocation>
        <location evidence="6">Endoplasmic reticulum membrane</location>
        <topology evidence="6">Multi-pass membrane protein</topology>
    </subcellularLocation>
</comment>
<comment type="tissue specificity">
    <text evidence="4">Expressed in leaves, flower buds and flowers.</text>
</comment>
<comment type="induction">
    <text>Not induced by tunicamycin.</text>
</comment>
<comment type="sequence caution" evidence="5">
    <conflict type="erroneous gene model prediction">
        <sequence resource="EMBL-CDS" id="AAD21421"/>
    </conflict>
</comment>
<dbReference type="EMBL" id="AC005882">
    <property type="protein sequence ID" value="AAD21421.1"/>
    <property type="status" value="ALT_SEQ"/>
    <property type="molecule type" value="Genomic_DNA"/>
</dbReference>
<dbReference type="EMBL" id="CP002684">
    <property type="protein sequence ID" value="AEE33884.1"/>
    <property type="molecule type" value="Genomic_DNA"/>
</dbReference>
<dbReference type="EMBL" id="AY080607">
    <property type="protein sequence ID" value="AAL86291.1"/>
    <property type="molecule type" value="mRNA"/>
</dbReference>
<dbReference type="EMBL" id="BT002337">
    <property type="protein sequence ID" value="AAN86170.1"/>
    <property type="molecule type" value="mRNA"/>
</dbReference>
<dbReference type="PIR" id="E96643">
    <property type="entry name" value="E96643"/>
</dbReference>
<dbReference type="RefSeq" id="NP_176370.2">
    <property type="nucleotide sequence ID" value="NM_104859.3"/>
</dbReference>
<dbReference type="SMR" id="Q8GUN6"/>
<dbReference type="FunCoup" id="Q8GUN6">
    <property type="interactions" value="2285"/>
</dbReference>
<dbReference type="STRING" id="3702.Q8GUN6"/>
<dbReference type="GlyCosmos" id="Q8GUN6">
    <property type="glycosylation" value="2 sites, No reported glycans"/>
</dbReference>
<dbReference type="GlyGen" id="Q8GUN6">
    <property type="glycosylation" value="2 sites"/>
</dbReference>
<dbReference type="iPTMnet" id="Q8GUN6"/>
<dbReference type="PaxDb" id="3702-AT1G61770.1"/>
<dbReference type="ProteomicsDB" id="222089"/>
<dbReference type="EnsemblPlants" id="AT1G61770.1">
    <property type="protein sequence ID" value="AT1G61770.1"/>
    <property type="gene ID" value="AT1G61770"/>
</dbReference>
<dbReference type="GeneID" id="842474"/>
<dbReference type="Gramene" id="AT1G61770.1">
    <property type="protein sequence ID" value="AT1G61770.1"/>
    <property type="gene ID" value="AT1G61770"/>
</dbReference>
<dbReference type="KEGG" id="ath:AT1G61770"/>
<dbReference type="Araport" id="AT1G61770"/>
<dbReference type="TAIR" id="AT1G61770"/>
<dbReference type="eggNOG" id="KOG0722">
    <property type="taxonomic scope" value="Eukaryota"/>
</dbReference>
<dbReference type="HOGENOM" id="CLU_055735_1_0_1"/>
<dbReference type="InParanoid" id="Q8GUN6"/>
<dbReference type="OMA" id="WFWRYTV"/>
<dbReference type="OrthoDB" id="10250354at2759"/>
<dbReference type="PhylomeDB" id="Q8GUN6"/>
<dbReference type="PRO" id="PR:Q8GUN6"/>
<dbReference type="Proteomes" id="UP000006548">
    <property type="component" value="Chromosome 1"/>
</dbReference>
<dbReference type="ExpressionAtlas" id="Q8GUN6">
    <property type="expression patterns" value="baseline and differential"/>
</dbReference>
<dbReference type="GO" id="GO:0005783">
    <property type="term" value="C:endoplasmic reticulum"/>
    <property type="evidence" value="ECO:0007005"/>
    <property type="project" value="TAIR"/>
</dbReference>
<dbReference type="GO" id="GO:0005789">
    <property type="term" value="C:endoplasmic reticulum membrane"/>
    <property type="evidence" value="ECO:0007669"/>
    <property type="project" value="UniProtKB-SubCell"/>
</dbReference>
<dbReference type="GO" id="GO:0005634">
    <property type="term" value="C:nucleus"/>
    <property type="evidence" value="ECO:0007005"/>
    <property type="project" value="TAIR"/>
</dbReference>
<dbReference type="GO" id="GO:0006457">
    <property type="term" value="P:protein folding"/>
    <property type="evidence" value="ECO:0007669"/>
    <property type="project" value="InterPro"/>
</dbReference>
<dbReference type="CDD" id="cd06257">
    <property type="entry name" value="DnaJ"/>
    <property type="match status" value="1"/>
</dbReference>
<dbReference type="FunFam" id="1.10.287.110:FF:000050">
    <property type="entry name" value="Chaperone protein dnaJ 50"/>
    <property type="match status" value="1"/>
</dbReference>
<dbReference type="Gene3D" id="1.10.287.110">
    <property type="entry name" value="DnaJ domain"/>
    <property type="match status" value="1"/>
</dbReference>
<dbReference type="InterPro" id="IPR001623">
    <property type="entry name" value="DnaJ_domain"/>
</dbReference>
<dbReference type="InterPro" id="IPR018253">
    <property type="entry name" value="DnaJ_domain_CS"/>
</dbReference>
<dbReference type="InterPro" id="IPR044632">
    <property type="entry name" value="DNAJC25-like"/>
</dbReference>
<dbReference type="InterPro" id="IPR036869">
    <property type="entry name" value="J_dom_sf"/>
</dbReference>
<dbReference type="PANTHER" id="PTHR44176">
    <property type="entry name" value="DNAJ HOMOLOG SUBFAMILY C MEMBER 25"/>
    <property type="match status" value="1"/>
</dbReference>
<dbReference type="PANTHER" id="PTHR44176:SF1">
    <property type="entry name" value="DNAJ HOMOLOG SUBFAMILY C MEMBER 25"/>
    <property type="match status" value="1"/>
</dbReference>
<dbReference type="Pfam" id="PF00226">
    <property type="entry name" value="DnaJ"/>
    <property type="match status" value="1"/>
</dbReference>
<dbReference type="PRINTS" id="PR00625">
    <property type="entry name" value="JDOMAIN"/>
</dbReference>
<dbReference type="SMART" id="SM00271">
    <property type="entry name" value="DnaJ"/>
    <property type="match status" value="1"/>
</dbReference>
<dbReference type="SUPFAM" id="SSF46565">
    <property type="entry name" value="Chaperone J-domain"/>
    <property type="match status" value="1"/>
</dbReference>
<dbReference type="PROSITE" id="PS00636">
    <property type="entry name" value="DNAJ_1"/>
    <property type="match status" value="1"/>
</dbReference>
<dbReference type="PROSITE" id="PS50076">
    <property type="entry name" value="DNAJ_2"/>
    <property type="match status" value="1"/>
</dbReference>
<reference key="1">
    <citation type="journal article" date="2000" name="Nature">
        <title>Sequence and analysis of chromosome 1 of the plant Arabidopsis thaliana.</title>
        <authorList>
            <person name="Theologis A."/>
            <person name="Ecker J.R."/>
            <person name="Palm C.J."/>
            <person name="Federspiel N.A."/>
            <person name="Kaul S."/>
            <person name="White O."/>
            <person name="Alonso J."/>
            <person name="Altafi H."/>
            <person name="Araujo R."/>
            <person name="Bowman C.L."/>
            <person name="Brooks S.Y."/>
            <person name="Buehler E."/>
            <person name="Chan A."/>
            <person name="Chao Q."/>
            <person name="Chen H."/>
            <person name="Cheuk R.F."/>
            <person name="Chin C.W."/>
            <person name="Chung M.K."/>
            <person name="Conn L."/>
            <person name="Conway A.B."/>
            <person name="Conway A.R."/>
            <person name="Creasy T.H."/>
            <person name="Dewar K."/>
            <person name="Dunn P."/>
            <person name="Etgu P."/>
            <person name="Feldblyum T.V."/>
            <person name="Feng J.-D."/>
            <person name="Fong B."/>
            <person name="Fujii C.Y."/>
            <person name="Gill J.E."/>
            <person name="Goldsmith A.D."/>
            <person name="Haas B."/>
            <person name="Hansen N.F."/>
            <person name="Hughes B."/>
            <person name="Huizar L."/>
            <person name="Hunter J.L."/>
            <person name="Jenkins J."/>
            <person name="Johnson-Hopson C."/>
            <person name="Khan S."/>
            <person name="Khaykin E."/>
            <person name="Kim C.J."/>
            <person name="Koo H.L."/>
            <person name="Kremenetskaia I."/>
            <person name="Kurtz D.B."/>
            <person name="Kwan A."/>
            <person name="Lam B."/>
            <person name="Langin-Hooper S."/>
            <person name="Lee A."/>
            <person name="Lee J.M."/>
            <person name="Lenz C.A."/>
            <person name="Li J.H."/>
            <person name="Li Y.-P."/>
            <person name="Lin X."/>
            <person name="Liu S.X."/>
            <person name="Liu Z.A."/>
            <person name="Luros J.S."/>
            <person name="Maiti R."/>
            <person name="Marziali A."/>
            <person name="Militscher J."/>
            <person name="Miranda M."/>
            <person name="Nguyen M."/>
            <person name="Nierman W.C."/>
            <person name="Osborne B.I."/>
            <person name="Pai G."/>
            <person name="Peterson J."/>
            <person name="Pham P.K."/>
            <person name="Rizzo M."/>
            <person name="Rooney T."/>
            <person name="Rowley D."/>
            <person name="Sakano H."/>
            <person name="Salzberg S.L."/>
            <person name="Schwartz J.R."/>
            <person name="Shinn P."/>
            <person name="Southwick A.M."/>
            <person name="Sun H."/>
            <person name="Tallon L.J."/>
            <person name="Tambunga G."/>
            <person name="Toriumi M.J."/>
            <person name="Town C.D."/>
            <person name="Utterback T."/>
            <person name="Van Aken S."/>
            <person name="Vaysberg M."/>
            <person name="Vysotskaia V.S."/>
            <person name="Walker M."/>
            <person name="Wu D."/>
            <person name="Yu G."/>
            <person name="Fraser C.M."/>
            <person name="Venter J.C."/>
            <person name="Davis R.W."/>
        </authorList>
    </citation>
    <scope>NUCLEOTIDE SEQUENCE [LARGE SCALE GENOMIC DNA]</scope>
    <source>
        <strain>cv. Columbia</strain>
    </source>
</reference>
<reference key="2">
    <citation type="journal article" date="2017" name="Plant J.">
        <title>Araport11: a complete reannotation of the Arabidopsis thaliana reference genome.</title>
        <authorList>
            <person name="Cheng C.Y."/>
            <person name="Krishnakumar V."/>
            <person name="Chan A.P."/>
            <person name="Thibaud-Nissen F."/>
            <person name="Schobel S."/>
            <person name="Town C.D."/>
        </authorList>
    </citation>
    <scope>GENOME REANNOTATION</scope>
    <source>
        <strain>cv. Columbia</strain>
    </source>
</reference>
<reference key="3">
    <citation type="journal article" date="2003" name="Science">
        <title>Empirical analysis of transcriptional activity in the Arabidopsis genome.</title>
        <authorList>
            <person name="Yamada K."/>
            <person name="Lim J."/>
            <person name="Dale J.M."/>
            <person name="Chen H."/>
            <person name="Shinn P."/>
            <person name="Palm C.J."/>
            <person name="Southwick A.M."/>
            <person name="Wu H.C."/>
            <person name="Kim C.J."/>
            <person name="Nguyen M."/>
            <person name="Pham P.K."/>
            <person name="Cheuk R.F."/>
            <person name="Karlin-Newmann G."/>
            <person name="Liu S.X."/>
            <person name="Lam B."/>
            <person name="Sakano H."/>
            <person name="Wu T."/>
            <person name="Yu G."/>
            <person name="Miranda M."/>
            <person name="Quach H.L."/>
            <person name="Tripp M."/>
            <person name="Chang C.H."/>
            <person name="Lee J.M."/>
            <person name="Toriumi M.J."/>
            <person name="Chan M.M."/>
            <person name="Tang C.C."/>
            <person name="Onodera C.S."/>
            <person name="Deng J.M."/>
            <person name="Akiyama K."/>
            <person name="Ansari Y."/>
            <person name="Arakawa T."/>
            <person name="Banh J."/>
            <person name="Banno F."/>
            <person name="Bowser L."/>
            <person name="Brooks S.Y."/>
            <person name="Carninci P."/>
            <person name="Chao Q."/>
            <person name="Choy N."/>
            <person name="Enju A."/>
            <person name="Goldsmith A.D."/>
            <person name="Gurjal M."/>
            <person name="Hansen N.F."/>
            <person name="Hayashizaki Y."/>
            <person name="Johnson-Hopson C."/>
            <person name="Hsuan V.W."/>
            <person name="Iida K."/>
            <person name="Karnes M."/>
            <person name="Khan S."/>
            <person name="Koesema E."/>
            <person name="Ishida J."/>
            <person name="Jiang P.X."/>
            <person name="Jones T."/>
            <person name="Kawai J."/>
            <person name="Kamiya A."/>
            <person name="Meyers C."/>
            <person name="Nakajima M."/>
            <person name="Narusaka M."/>
            <person name="Seki M."/>
            <person name="Sakurai T."/>
            <person name="Satou M."/>
            <person name="Tamse R."/>
            <person name="Vaysberg M."/>
            <person name="Wallender E.K."/>
            <person name="Wong C."/>
            <person name="Yamamura Y."/>
            <person name="Yuan S."/>
            <person name="Shinozaki K."/>
            <person name="Davis R.W."/>
            <person name="Theologis A."/>
            <person name="Ecker J.R."/>
        </authorList>
    </citation>
    <scope>NUCLEOTIDE SEQUENCE [LARGE SCALE MRNA]</scope>
    <source>
        <strain>cv. Columbia</strain>
    </source>
</reference>
<reference key="4">
    <citation type="journal article" date="2001" name="Cell Stress Chaperones">
        <title>The J-domain proteins of Arabidopsis thaliana: an unexpectedly large and diverse family of chaperones.</title>
        <authorList>
            <person name="Miernyk J.A."/>
        </authorList>
    </citation>
    <scope>GENE FAMILY</scope>
    <scope>NOMENCLATURE</scope>
</reference>
<reference key="5">
    <citation type="journal article" date="2008" name="Plant Cell Physiol.">
        <title>Arabidopsis thaliana has a set of J proteins in the endoplasmic reticulum that are conserved from yeast to animals and plants.</title>
        <authorList>
            <person name="Yamamoto M."/>
            <person name="Maruyama D."/>
            <person name="Endo T."/>
            <person name="Nishikawa S."/>
        </authorList>
    </citation>
    <scope>FUNCTION</scope>
    <scope>SUBCELLULAR LOCATION</scope>
    <scope>TISSUE SPECIFICITY</scope>
    <scope>LACK OF INDUCTION BY TUNICAMYCIN</scope>
</reference>